<organism>
    <name type="scientific">Streptococcus pneumoniae serotype 4 (strain ATCC BAA-334 / TIGR4)</name>
    <dbReference type="NCBI Taxonomy" id="170187"/>
    <lineage>
        <taxon>Bacteria</taxon>
        <taxon>Bacillati</taxon>
        <taxon>Bacillota</taxon>
        <taxon>Bacilli</taxon>
        <taxon>Lactobacillales</taxon>
        <taxon>Streptococcaceae</taxon>
        <taxon>Streptococcus</taxon>
    </lineage>
</organism>
<keyword id="KW-1185">Reference proteome</keyword>
<comment type="interaction">
    <interactant intactId="EBI-6475322">
        <id>Q97SX1</id>
    </interactant>
    <interactant intactId="EBI-6475325">
        <id>A0A0H2UN86</id>
        <label>SP_0260</label>
    </interactant>
    <organismsDiffer>false</organismsDiffer>
    <experiments>3</experiments>
</comment>
<comment type="similarity">
    <text evidence="1">Belongs to the UPF0297 family.</text>
</comment>
<reference key="1">
    <citation type="journal article" date="2001" name="Science">
        <title>Complete genome sequence of a virulent isolate of Streptococcus pneumoniae.</title>
        <authorList>
            <person name="Tettelin H."/>
            <person name="Nelson K.E."/>
            <person name="Paulsen I.T."/>
            <person name="Eisen J.A."/>
            <person name="Read T.D."/>
            <person name="Peterson S.N."/>
            <person name="Heidelberg J.F."/>
            <person name="DeBoy R.T."/>
            <person name="Haft D.H."/>
            <person name="Dodson R.J."/>
            <person name="Durkin A.S."/>
            <person name="Gwinn M.L."/>
            <person name="Kolonay J.F."/>
            <person name="Nelson W.C."/>
            <person name="Peterson J.D."/>
            <person name="Umayam L.A."/>
            <person name="White O."/>
            <person name="Salzberg S.L."/>
            <person name="Lewis M.R."/>
            <person name="Radune D."/>
            <person name="Holtzapple E.K."/>
            <person name="Khouri H.M."/>
            <person name="Wolf A.M."/>
            <person name="Utterback T.R."/>
            <person name="Hansen C.L."/>
            <person name="McDonald L.A."/>
            <person name="Feldblyum T.V."/>
            <person name="Angiuoli S.V."/>
            <person name="Dickinson T."/>
            <person name="Hickey E.K."/>
            <person name="Holt I.E."/>
            <person name="Loftus B.J."/>
            <person name="Yang F."/>
            <person name="Smith H.O."/>
            <person name="Venter J.C."/>
            <person name="Dougherty B.A."/>
            <person name="Morrison D.A."/>
            <person name="Hollingshead S.K."/>
            <person name="Fraser C.M."/>
        </authorList>
    </citation>
    <scope>NUCLEOTIDE SEQUENCE [LARGE SCALE GENOMIC DNA]</scope>
    <source>
        <strain>ATCC BAA-334 / TIGR4</strain>
    </source>
</reference>
<evidence type="ECO:0000255" key="1">
    <source>
        <dbReference type="HAMAP-Rule" id="MF_01507"/>
    </source>
</evidence>
<sequence>MGFTEETVRFKLDDSNKKEISETLTDVYASLNDKGYNPINQIVGYVLSGDPAYVPRYNNARNQIRKYERDEIVEELVRYYLKGQGVDL</sequence>
<gene>
    <name type="ordered locus">SP_0192</name>
</gene>
<accession>Q97SX1</accession>
<name>Y192_STRPN</name>
<protein>
    <recommendedName>
        <fullName evidence="1">UPF0297 protein SP_0192</fullName>
    </recommendedName>
</protein>
<proteinExistence type="evidence at protein level"/>
<feature type="chain" id="PRO_0000216990" description="UPF0297 protein SP_0192">
    <location>
        <begin position="1"/>
        <end position="88"/>
    </location>
</feature>
<dbReference type="EMBL" id="AE005672">
    <property type="protein sequence ID" value="AAK74373.1"/>
    <property type="molecule type" value="Genomic_DNA"/>
</dbReference>
<dbReference type="PIR" id="D95022">
    <property type="entry name" value="D95022"/>
</dbReference>
<dbReference type="RefSeq" id="WP_000507059.1">
    <property type="nucleotide sequence ID" value="NZ_CP155539.1"/>
</dbReference>
<dbReference type="SMR" id="Q97SX1"/>
<dbReference type="IntAct" id="Q97SX1">
    <property type="interactions" value="1"/>
</dbReference>
<dbReference type="PaxDb" id="170187-SP_0192"/>
<dbReference type="EnsemblBacteria" id="AAK74373">
    <property type="protein sequence ID" value="AAK74373"/>
    <property type="gene ID" value="SP_0192"/>
</dbReference>
<dbReference type="KEGG" id="spn:SP_0192"/>
<dbReference type="eggNOG" id="COG4472">
    <property type="taxonomic scope" value="Bacteria"/>
</dbReference>
<dbReference type="PhylomeDB" id="Q97SX1"/>
<dbReference type="BioCyc" id="SPNE170187:G1FZB-199-MONOMER"/>
<dbReference type="Proteomes" id="UP000000585">
    <property type="component" value="Chromosome"/>
</dbReference>
<dbReference type="HAMAP" id="MF_01507">
    <property type="entry name" value="UPF0297"/>
    <property type="match status" value="1"/>
</dbReference>
<dbReference type="InterPro" id="IPR009309">
    <property type="entry name" value="IreB"/>
</dbReference>
<dbReference type="NCBIfam" id="NF003997">
    <property type="entry name" value="PRK05473.1"/>
    <property type="match status" value="1"/>
</dbReference>
<dbReference type="PANTHER" id="PTHR40067">
    <property type="entry name" value="UPF0297 PROTEIN YRZL"/>
    <property type="match status" value="1"/>
</dbReference>
<dbReference type="PANTHER" id="PTHR40067:SF1">
    <property type="entry name" value="UPF0297 PROTEIN YRZL"/>
    <property type="match status" value="1"/>
</dbReference>
<dbReference type="Pfam" id="PF06135">
    <property type="entry name" value="IreB"/>
    <property type="match status" value="1"/>
</dbReference>
<dbReference type="PIRSF" id="PIRSF037258">
    <property type="entry name" value="DUF965_bac"/>
    <property type="match status" value="1"/>
</dbReference>